<name>RS12_ACIBY</name>
<dbReference type="EMBL" id="CU459141">
    <property type="protein sequence ID" value="CAM87771.1"/>
    <property type="molecule type" value="Genomic_DNA"/>
</dbReference>
<dbReference type="RefSeq" id="WP_000246374.1">
    <property type="nucleotide sequence ID" value="NZ_JBDGFB010000031.1"/>
</dbReference>
<dbReference type="SMR" id="B0V8W3"/>
<dbReference type="EnsemblBacteria" id="CAM87771">
    <property type="protein sequence ID" value="CAM87771"/>
    <property type="gene ID" value="ABAYE2949"/>
</dbReference>
<dbReference type="GeneID" id="92892795"/>
<dbReference type="KEGG" id="aby:ABAYE2949"/>
<dbReference type="HOGENOM" id="CLU_104295_1_2_6"/>
<dbReference type="GO" id="GO:0015935">
    <property type="term" value="C:small ribosomal subunit"/>
    <property type="evidence" value="ECO:0007669"/>
    <property type="project" value="InterPro"/>
</dbReference>
<dbReference type="GO" id="GO:0019843">
    <property type="term" value="F:rRNA binding"/>
    <property type="evidence" value="ECO:0007669"/>
    <property type="project" value="UniProtKB-UniRule"/>
</dbReference>
<dbReference type="GO" id="GO:0003735">
    <property type="term" value="F:structural constituent of ribosome"/>
    <property type="evidence" value="ECO:0007669"/>
    <property type="project" value="InterPro"/>
</dbReference>
<dbReference type="GO" id="GO:0000049">
    <property type="term" value="F:tRNA binding"/>
    <property type="evidence" value="ECO:0007669"/>
    <property type="project" value="UniProtKB-UniRule"/>
</dbReference>
<dbReference type="GO" id="GO:0006412">
    <property type="term" value="P:translation"/>
    <property type="evidence" value="ECO:0007669"/>
    <property type="project" value="UniProtKB-UniRule"/>
</dbReference>
<dbReference type="CDD" id="cd03368">
    <property type="entry name" value="Ribosomal_S12"/>
    <property type="match status" value="1"/>
</dbReference>
<dbReference type="FunFam" id="2.40.50.140:FF:000001">
    <property type="entry name" value="30S ribosomal protein S12"/>
    <property type="match status" value="1"/>
</dbReference>
<dbReference type="Gene3D" id="2.40.50.140">
    <property type="entry name" value="Nucleic acid-binding proteins"/>
    <property type="match status" value="1"/>
</dbReference>
<dbReference type="HAMAP" id="MF_00403_B">
    <property type="entry name" value="Ribosomal_uS12_B"/>
    <property type="match status" value="1"/>
</dbReference>
<dbReference type="InterPro" id="IPR012340">
    <property type="entry name" value="NA-bd_OB-fold"/>
</dbReference>
<dbReference type="InterPro" id="IPR006032">
    <property type="entry name" value="Ribosomal_uS12"/>
</dbReference>
<dbReference type="InterPro" id="IPR005679">
    <property type="entry name" value="Ribosomal_uS12_bac"/>
</dbReference>
<dbReference type="NCBIfam" id="TIGR00981">
    <property type="entry name" value="rpsL_bact"/>
    <property type="match status" value="1"/>
</dbReference>
<dbReference type="PANTHER" id="PTHR11652">
    <property type="entry name" value="30S RIBOSOMAL PROTEIN S12 FAMILY MEMBER"/>
    <property type="match status" value="1"/>
</dbReference>
<dbReference type="Pfam" id="PF00164">
    <property type="entry name" value="Ribosom_S12_S23"/>
    <property type="match status" value="1"/>
</dbReference>
<dbReference type="PIRSF" id="PIRSF002133">
    <property type="entry name" value="Ribosomal_S12/S23"/>
    <property type="match status" value="1"/>
</dbReference>
<dbReference type="PRINTS" id="PR01034">
    <property type="entry name" value="RIBOSOMALS12"/>
</dbReference>
<dbReference type="SUPFAM" id="SSF50249">
    <property type="entry name" value="Nucleic acid-binding proteins"/>
    <property type="match status" value="1"/>
</dbReference>
<dbReference type="PROSITE" id="PS00055">
    <property type="entry name" value="RIBOSOMAL_S12"/>
    <property type="match status" value="1"/>
</dbReference>
<protein>
    <recommendedName>
        <fullName evidence="2">Small ribosomal subunit protein uS12</fullName>
    </recommendedName>
    <alternativeName>
        <fullName evidence="3">30S ribosomal protein S12</fullName>
    </alternativeName>
</protein>
<organism>
    <name type="scientific">Acinetobacter baumannii (strain AYE)</name>
    <dbReference type="NCBI Taxonomy" id="509173"/>
    <lineage>
        <taxon>Bacteria</taxon>
        <taxon>Pseudomonadati</taxon>
        <taxon>Pseudomonadota</taxon>
        <taxon>Gammaproteobacteria</taxon>
        <taxon>Moraxellales</taxon>
        <taxon>Moraxellaceae</taxon>
        <taxon>Acinetobacter</taxon>
        <taxon>Acinetobacter calcoaceticus/baumannii complex</taxon>
    </lineage>
</organism>
<reference key="1">
    <citation type="journal article" date="2008" name="PLoS ONE">
        <title>Comparative analysis of Acinetobacters: three genomes for three lifestyles.</title>
        <authorList>
            <person name="Vallenet D."/>
            <person name="Nordmann P."/>
            <person name="Barbe V."/>
            <person name="Poirel L."/>
            <person name="Mangenot S."/>
            <person name="Bataille E."/>
            <person name="Dossat C."/>
            <person name="Gas S."/>
            <person name="Kreimeyer A."/>
            <person name="Lenoble P."/>
            <person name="Oztas S."/>
            <person name="Poulain J."/>
            <person name="Segurens B."/>
            <person name="Robert C."/>
            <person name="Abergel C."/>
            <person name="Claverie J.-M."/>
            <person name="Raoult D."/>
            <person name="Medigue C."/>
            <person name="Weissenbach J."/>
            <person name="Cruveiller S."/>
        </authorList>
    </citation>
    <scope>NUCLEOTIDE SEQUENCE [LARGE SCALE GENOMIC DNA]</scope>
    <source>
        <strain>AYE</strain>
    </source>
</reference>
<gene>
    <name evidence="2" type="primary">rpsL</name>
    <name type="ordered locus">ABAYE2949</name>
</gene>
<keyword id="KW-0488">Methylation</keyword>
<keyword id="KW-0687">Ribonucleoprotein</keyword>
<keyword id="KW-0689">Ribosomal protein</keyword>
<keyword id="KW-0694">RNA-binding</keyword>
<keyword id="KW-0699">rRNA-binding</keyword>
<keyword id="KW-0820">tRNA-binding</keyword>
<comment type="function">
    <text evidence="2">With S4 and S5 plays an important role in translational accuracy.</text>
</comment>
<comment type="function">
    <text evidence="2">Interacts with and stabilizes bases of the 16S rRNA that are involved in tRNA selection in the A site and with the mRNA backbone. Located at the interface of the 30S and 50S subunits, it traverses the body of the 30S subunit contacting proteins on the other side and probably holding the rRNA structure together. The combined cluster of proteins S8, S12 and S17 appears to hold together the shoulder and platform of the 30S subunit.</text>
</comment>
<comment type="subunit">
    <text evidence="2">Part of the 30S ribosomal subunit. Contacts proteins S8 and S17. May interact with IF1 in the 30S initiation complex.</text>
</comment>
<comment type="similarity">
    <text evidence="2">Belongs to the universal ribosomal protein uS12 family.</text>
</comment>
<accession>B0V8W3</accession>
<evidence type="ECO:0000250" key="1"/>
<evidence type="ECO:0000255" key="2">
    <source>
        <dbReference type="HAMAP-Rule" id="MF_00403"/>
    </source>
</evidence>
<evidence type="ECO:0000305" key="3"/>
<sequence length="124" mass="13766">MATTNQLIRKGRTTLVEKSKVPALKACPQRRGVCTRVYTTTPKKPNSAMRKVCRVRLTSGFEVSSYIGGEGHNLQEHSVVLIRGGRVKDLPGVRYHTVRGSLDCAGVKDRNQSRSKYGAKRPKK</sequence>
<proteinExistence type="inferred from homology"/>
<feature type="chain" id="PRO_1000194106" description="Small ribosomal subunit protein uS12">
    <location>
        <begin position="1"/>
        <end position="124"/>
    </location>
</feature>
<feature type="modified residue" description="3-methylthioaspartic acid" evidence="1">
    <location>
        <position position="89"/>
    </location>
</feature>